<evidence type="ECO:0000255" key="1">
    <source>
        <dbReference type="HAMAP-Rule" id="MF_00169"/>
    </source>
</evidence>
<sequence length="147" mass="16388">MKKILLLNGPNLNMLGKREPHIYGSQTLADIENHLQQLAKARGYCLEYFQANGEEPIINRIHQSFQNTDFIIINPGASTHTSVALRDALLSVAIPFVEVHLSNVHAREPFRHHSYLSDVAKGVICGLGAKGYDYALDYAIQFLKSGK</sequence>
<feature type="chain" id="PRO_1000123691" description="3-dehydroquinate dehydratase">
    <location>
        <begin position="1"/>
        <end position="147"/>
    </location>
</feature>
<feature type="active site" description="Proton acceptor" evidence="1">
    <location>
        <position position="23"/>
    </location>
</feature>
<feature type="active site" description="Proton donor" evidence="1">
    <location>
        <position position="100"/>
    </location>
</feature>
<feature type="binding site" evidence="1">
    <location>
        <position position="74"/>
    </location>
    <ligand>
        <name>substrate</name>
    </ligand>
</feature>
<feature type="binding site" evidence="1">
    <location>
        <position position="80"/>
    </location>
    <ligand>
        <name>substrate</name>
    </ligand>
</feature>
<feature type="binding site" evidence="1">
    <location>
        <position position="87"/>
    </location>
    <ligand>
        <name>substrate</name>
    </ligand>
</feature>
<feature type="binding site" evidence="1">
    <location>
        <begin position="101"/>
        <end position="102"/>
    </location>
    <ligand>
        <name>substrate</name>
    </ligand>
</feature>
<feature type="binding site" evidence="1">
    <location>
        <position position="111"/>
    </location>
    <ligand>
        <name>substrate</name>
    </ligand>
</feature>
<feature type="site" description="Transition state stabilizer" evidence="1">
    <location>
        <position position="18"/>
    </location>
</feature>
<organism>
    <name type="scientific">Glaesserella parasuis serovar 5 (strain SH0165)</name>
    <name type="common">Haemophilus parasuis</name>
    <dbReference type="NCBI Taxonomy" id="557723"/>
    <lineage>
        <taxon>Bacteria</taxon>
        <taxon>Pseudomonadati</taxon>
        <taxon>Pseudomonadota</taxon>
        <taxon>Gammaproteobacteria</taxon>
        <taxon>Pasteurellales</taxon>
        <taxon>Pasteurellaceae</taxon>
        <taxon>Glaesserella</taxon>
    </lineage>
</organism>
<keyword id="KW-0028">Amino-acid biosynthesis</keyword>
<keyword id="KW-0057">Aromatic amino acid biosynthesis</keyword>
<keyword id="KW-0456">Lyase</keyword>
<keyword id="KW-1185">Reference proteome</keyword>
<gene>
    <name evidence="1" type="primary">aroQ</name>
    <name type="ordered locus">HAPS_1288</name>
</gene>
<reference key="1">
    <citation type="journal article" date="2009" name="J. Bacteriol.">
        <title>Complete genome sequence of Haemophilus parasuis SH0165.</title>
        <authorList>
            <person name="Yue M."/>
            <person name="Yang F."/>
            <person name="Yang J."/>
            <person name="Bei W."/>
            <person name="Cai X."/>
            <person name="Chen L."/>
            <person name="Dong J."/>
            <person name="Zhou R."/>
            <person name="Jin M."/>
            <person name="Jin Q."/>
            <person name="Chen H."/>
        </authorList>
    </citation>
    <scope>NUCLEOTIDE SEQUENCE [LARGE SCALE GENOMIC DNA]</scope>
    <source>
        <strain>SH0165</strain>
    </source>
</reference>
<name>AROQ_GLAP5</name>
<proteinExistence type="inferred from homology"/>
<comment type="function">
    <text evidence="1">Catalyzes a trans-dehydration via an enolate intermediate.</text>
</comment>
<comment type="catalytic activity">
    <reaction evidence="1">
        <text>3-dehydroquinate = 3-dehydroshikimate + H2O</text>
        <dbReference type="Rhea" id="RHEA:21096"/>
        <dbReference type="ChEBI" id="CHEBI:15377"/>
        <dbReference type="ChEBI" id="CHEBI:16630"/>
        <dbReference type="ChEBI" id="CHEBI:32364"/>
        <dbReference type="EC" id="4.2.1.10"/>
    </reaction>
</comment>
<comment type="pathway">
    <text evidence="1">Metabolic intermediate biosynthesis; chorismate biosynthesis; chorismate from D-erythrose 4-phosphate and phosphoenolpyruvate: step 3/7.</text>
</comment>
<comment type="subunit">
    <text evidence="1">Homododecamer.</text>
</comment>
<comment type="similarity">
    <text evidence="1">Belongs to the type-II 3-dehydroquinase family.</text>
</comment>
<protein>
    <recommendedName>
        <fullName evidence="1">3-dehydroquinate dehydratase</fullName>
        <shortName evidence="1">3-dehydroquinase</shortName>
        <ecNumber evidence="1">4.2.1.10</ecNumber>
    </recommendedName>
    <alternativeName>
        <fullName evidence="1">Type II DHQase</fullName>
    </alternativeName>
</protein>
<dbReference type="EC" id="4.2.1.10" evidence="1"/>
<dbReference type="EMBL" id="CP001321">
    <property type="protein sequence ID" value="ACL32880.1"/>
    <property type="molecule type" value="Genomic_DNA"/>
</dbReference>
<dbReference type="RefSeq" id="WP_015939704.1">
    <property type="nucleotide sequence ID" value="NC_011852.1"/>
</dbReference>
<dbReference type="SMR" id="B8F6C8"/>
<dbReference type="STRING" id="557723.HAPS_1288"/>
<dbReference type="GeneID" id="66618250"/>
<dbReference type="KEGG" id="hap:HAPS_1288"/>
<dbReference type="PATRIC" id="fig|557723.8.peg.1272"/>
<dbReference type="HOGENOM" id="CLU_090968_1_0_6"/>
<dbReference type="UniPathway" id="UPA00053">
    <property type="reaction ID" value="UER00086"/>
</dbReference>
<dbReference type="Proteomes" id="UP000006743">
    <property type="component" value="Chromosome"/>
</dbReference>
<dbReference type="GO" id="GO:0003855">
    <property type="term" value="F:3-dehydroquinate dehydratase activity"/>
    <property type="evidence" value="ECO:0007669"/>
    <property type="project" value="UniProtKB-UniRule"/>
</dbReference>
<dbReference type="GO" id="GO:0008652">
    <property type="term" value="P:amino acid biosynthetic process"/>
    <property type="evidence" value="ECO:0007669"/>
    <property type="project" value="UniProtKB-KW"/>
</dbReference>
<dbReference type="GO" id="GO:0009073">
    <property type="term" value="P:aromatic amino acid family biosynthetic process"/>
    <property type="evidence" value="ECO:0007669"/>
    <property type="project" value="UniProtKB-KW"/>
</dbReference>
<dbReference type="GO" id="GO:0009423">
    <property type="term" value="P:chorismate biosynthetic process"/>
    <property type="evidence" value="ECO:0007669"/>
    <property type="project" value="UniProtKB-UniRule"/>
</dbReference>
<dbReference type="GO" id="GO:0019631">
    <property type="term" value="P:quinate catabolic process"/>
    <property type="evidence" value="ECO:0007669"/>
    <property type="project" value="TreeGrafter"/>
</dbReference>
<dbReference type="CDD" id="cd00466">
    <property type="entry name" value="DHQase_II"/>
    <property type="match status" value="1"/>
</dbReference>
<dbReference type="Gene3D" id="3.40.50.9100">
    <property type="entry name" value="Dehydroquinase, class II"/>
    <property type="match status" value="1"/>
</dbReference>
<dbReference type="HAMAP" id="MF_00169">
    <property type="entry name" value="AroQ"/>
    <property type="match status" value="1"/>
</dbReference>
<dbReference type="InterPro" id="IPR001874">
    <property type="entry name" value="DHquinase_II"/>
</dbReference>
<dbReference type="InterPro" id="IPR018509">
    <property type="entry name" value="DHquinase_II_CS"/>
</dbReference>
<dbReference type="InterPro" id="IPR036441">
    <property type="entry name" value="DHquinase_II_sf"/>
</dbReference>
<dbReference type="NCBIfam" id="TIGR01088">
    <property type="entry name" value="aroQ"/>
    <property type="match status" value="1"/>
</dbReference>
<dbReference type="NCBIfam" id="NF003804">
    <property type="entry name" value="PRK05395.1-1"/>
    <property type="match status" value="1"/>
</dbReference>
<dbReference type="NCBIfam" id="NF003805">
    <property type="entry name" value="PRK05395.1-2"/>
    <property type="match status" value="1"/>
</dbReference>
<dbReference type="NCBIfam" id="NF003806">
    <property type="entry name" value="PRK05395.1-3"/>
    <property type="match status" value="1"/>
</dbReference>
<dbReference type="NCBIfam" id="NF003807">
    <property type="entry name" value="PRK05395.1-4"/>
    <property type="match status" value="1"/>
</dbReference>
<dbReference type="PANTHER" id="PTHR21272">
    <property type="entry name" value="CATABOLIC 3-DEHYDROQUINASE"/>
    <property type="match status" value="1"/>
</dbReference>
<dbReference type="PANTHER" id="PTHR21272:SF3">
    <property type="entry name" value="CATABOLIC 3-DEHYDROQUINASE"/>
    <property type="match status" value="1"/>
</dbReference>
<dbReference type="Pfam" id="PF01220">
    <property type="entry name" value="DHquinase_II"/>
    <property type="match status" value="1"/>
</dbReference>
<dbReference type="PIRSF" id="PIRSF001399">
    <property type="entry name" value="DHquinase_II"/>
    <property type="match status" value="1"/>
</dbReference>
<dbReference type="SUPFAM" id="SSF52304">
    <property type="entry name" value="Type II 3-dehydroquinate dehydratase"/>
    <property type="match status" value="1"/>
</dbReference>
<dbReference type="PROSITE" id="PS01029">
    <property type="entry name" value="DEHYDROQUINASE_II"/>
    <property type="match status" value="1"/>
</dbReference>
<accession>B8F6C8</accession>